<reference evidence="17" key="1">
    <citation type="journal article" date="2002" name="Nature">
        <title>Genome sequence of the human malaria parasite Plasmodium falciparum.</title>
        <authorList>
            <person name="Gardner M.J."/>
            <person name="Hall N."/>
            <person name="Fung E."/>
            <person name="White O."/>
            <person name="Berriman M."/>
            <person name="Hyman R.W."/>
            <person name="Carlton J.M."/>
            <person name="Pain A."/>
            <person name="Nelson K.E."/>
            <person name="Bowman S."/>
            <person name="Paulsen I.T."/>
            <person name="James K.D."/>
            <person name="Eisen J.A."/>
            <person name="Rutherford K.M."/>
            <person name="Salzberg S.L."/>
            <person name="Craig A."/>
            <person name="Kyes S."/>
            <person name="Chan M.-S."/>
            <person name="Nene V."/>
            <person name="Shallom S.J."/>
            <person name="Suh B."/>
            <person name="Peterson J."/>
            <person name="Angiuoli S."/>
            <person name="Pertea M."/>
            <person name="Allen J."/>
            <person name="Selengut J."/>
            <person name="Haft D."/>
            <person name="Mather M.W."/>
            <person name="Vaidya A.B."/>
            <person name="Martin D.M.A."/>
            <person name="Fairlamb A.H."/>
            <person name="Fraunholz M.J."/>
            <person name="Roos D.S."/>
            <person name="Ralph S.A."/>
            <person name="McFadden G.I."/>
            <person name="Cummings L.M."/>
            <person name="Subramanian G.M."/>
            <person name="Mungall C."/>
            <person name="Venter J.C."/>
            <person name="Carucci D.J."/>
            <person name="Hoffman S.L."/>
            <person name="Newbold C."/>
            <person name="Davis R.W."/>
            <person name="Fraser C.M."/>
            <person name="Barrell B.G."/>
        </authorList>
    </citation>
    <scope>NUCLEOTIDE SEQUENCE [LARGE SCALE GENOMIC DNA]</scope>
    <source>
        <strain evidence="17">3D7</strain>
    </source>
</reference>
<reference evidence="17" key="2">
    <citation type="journal article" date="2002" name="Nature">
        <title>Sequence of Plasmodium falciparum chromosomes 1, 3-9 and 13.</title>
        <authorList>
            <person name="Hall N."/>
            <person name="Pain A."/>
            <person name="Berriman M."/>
            <person name="Churcher C.M."/>
            <person name="Harris B."/>
            <person name="Harris D."/>
            <person name="Mungall K.L."/>
            <person name="Bowman S."/>
            <person name="Atkin R."/>
            <person name="Baker S."/>
            <person name="Barron A."/>
            <person name="Brooks K."/>
            <person name="Buckee C.O."/>
            <person name="Burrows C."/>
            <person name="Cherevach I."/>
            <person name="Chillingworth C."/>
            <person name="Chillingworth T."/>
            <person name="Christodoulou Z."/>
            <person name="Clark L."/>
            <person name="Clark R."/>
            <person name="Corton C."/>
            <person name="Cronin A."/>
            <person name="Davies R.M."/>
            <person name="Davis P."/>
            <person name="Dear P."/>
            <person name="Dearden F."/>
            <person name="Doggett J."/>
            <person name="Feltwell T."/>
            <person name="Goble A."/>
            <person name="Goodhead I."/>
            <person name="Gwilliam R."/>
            <person name="Hamlin N."/>
            <person name="Hance Z."/>
            <person name="Harper D."/>
            <person name="Hauser H."/>
            <person name="Hornsby T."/>
            <person name="Holroyd S."/>
            <person name="Horrocks P."/>
            <person name="Humphray S."/>
            <person name="Jagels K."/>
            <person name="James K.D."/>
            <person name="Johnson D."/>
            <person name="Kerhornou A."/>
            <person name="Knights A."/>
            <person name="Konfortov B."/>
            <person name="Kyes S."/>
            <person name="Larke N."/>
            <person name="Lawson D."/>
            <person name="Lennard N."/>
            <person name="Line A."/>
            <person name="Maddison M."/>
            <person name="Mclean J."/>
            <person name="Mooney P."/>
            <person name="Moule S."/>
            <person name="Murphy L."/>
            <person name="Oliver K."/>
            <person name="Ormond D."/>
            <person name="Price C."/>
            <person name="Quail M.A."/>
            <person name="Rabbinowitsch E."/>
            <person name="Rajandream M.A."/>
            <person name="Rutter S."/>
            <person name="Rutherford K.M."/>
            <person name="Sanders M."/>
            <person name="Simmonds M."/>
            <person name="Seeger K."/>
            <person name="Sharp S."/>
            <person name="Smith R."/>
            <person name="Squares R."/>
            <person name="Squares S."/>
            <person name="Stevens K."/>
            <person name="Taylor K."/>
            <person name="Tivey A."/>
            <person name="Unwin L."/>
            <person name="Whitehead S."/>
            <person name="Woodward J.R."/>
            <person name="Sulston J.E."/>
            <person name="Craig A."/>
            <person name="Newbold C."/>
            <person name="Barrell B.G."/>
        </authorList>
    </citation>
    <scope>NUCLEOTIDE SEQUENCE [LARGE SCALE GENOMIC DNA]</scope>
    <source>
        <strain evidence="17">3D7</strain>
    </source>
</reference>
<reference evidence="11" key="3">
    <citation type="journal article" date="2008" name="J. Biol. Chem.">
        <title>Plasmodium falciparum purine nucleoside phosphorylase is critical for viability of malaria parasites.</title>
        <authorList>
            <person name="Madrid D.C."/>
            <person name="Ting L.M."/>
            <person name="Waller K.L."/>
            <person name="Schramm V.L."/>
            <person name="Kim K."/>
        </authorList>
    </citation>
    <scope>FUNCTION</scope>
    <scope>CATALYTIC ACTIVITY</scope>
    <scope>PATHWAY</scope>
    <scope>DEVELOPMENTAL STAGE</scope>
    <scope>DISRUPTION PHENOTYPE</scope>
</reference>
<reference evidence="18 19" key="4">
    <citation type="journal article" date="2004" name="J. Biol. Chem.">
        <title>Plasmodium falciparum purine nucleoside phosphorylase: crystal structures, immucillin inhibitors, and dual catalytic function.</title>
        <authorList>
            <person name="Shi W."/>
            <person name="Ting L.M."/>
            <person name="Kicska G.A."/>
            <person name="Lewandowicz A."/>
            <person name="Tyler P.C."/>
            <person name="Evans G.B."/>
            <person name="Furneaux R.H."/>
            <person name="Kim K."/>
            <person name="Almo S.C."/>
            <person name="Schramm V.L."/>
        </authorList>
    </citation>
    <scope>X-RAY CRYSTALLOGRAPHY (2.02 ANGSTROMS) OF 2-245 IN COMPLEX WITH PHOSPHATE ANALOG AND INHIBITOR IMMUCILLIN-H</scope>
    <scope>FUNCTION</scope>
    <scope>CATALYTIC ACTIVITY</scope>
    <scope>ACTIVITY REGULATION</scope>
    <scope>BIOPHYSICOCHEMICAL PROPERTIES</scope>
    <scope>PATHWAY</scope>
    <scope>SUBUNIT</scope>
</reference>
<reference evidence="20 21" key="5">
    <citation type="journal article" date="2005" name="Acta Crystallogr. D">
        <title>Structures of Plasmodium falciparum purine nucleoside phosphorylase complexed with sulfate and its natural substrate inosine.</title>
        <authorList>
            <person name="Schnick C."/>
            <person name="Robien M.A."/>
            <person name="Brzozowski A.M."/>
            <person name="Dodson E.J."/>
            <person name="Murshudov G.N."/>
            <person name="Anderson L."/>
            <person name="Luft J.R."/>
            <person name="Mehlin C."/>
            <person name="Hol W.G."/>
            <person name="Brannigan J.A."/>
            <person name="Wilkinson A.J."/>
        </authorList>
    </citation>
    <scope>X-RAY CRYSTALLOGRAPHY (2.00 ANGSTROMS) IN COMPLEX WITH INOSINE</scope>
    <scope>FUNCTION</scope>
    <scope>CATALYTIC ACTIVITY</scope>
    <scope>PATHWAY</scope>
    <scope>SUBUNIT</scope>
</reference>
<reference evidence="22" key="6">
    <citation type="journal article" date="2009" name="BMC Struct. Biol.">
        <title>Conservation of structure and activity in Plasmodium purine nucleoside phosphorylases.</title>
        <authorList>
            <person name="Chaikuad A."/>
            <person name="Brady R.L."/>
        </authorList>
    </citation>
    <scope>X-RAY CRYSTALLOGRAPHY (2.03 ANGSTROMS) IN COMPLEX WITH HYPOXANTHINE; RIBOSE AND PHOSPHATE ANALOG</scope>
    <scope>FUNCTION</scope>
    <scope>CATALYTIC ACTIVITY</scope>
    <scope>BIOPHYSICOCHEMICAL PROPERTIES</scope>
    <scope>PATHWAY</scope>
    <scope>SUBUNIT</scope>
</reference>
<reference evidence="24" key="7">
    <citation type="submission" date="2010-11" db="PDB data bank">
        <title>Crystal Structure of Plasmodium falciparum purine nucleoside phosphorylase in complex with DADMe-ImmG.</title>
        <authorList>
            <person name="Ho M."/>
            <person name="Edwards A.A."/>
            <person name="Almo S.C."/>
            <person name="Schramm V.L."/>
        </authorList>
    </citation>
    <scope>X-RAY CRYSTALLOGRAPHY (2.00 ANGSTROMS) OF 2-245 IN COMPLEX WITH IN COMPLEX WITH PHOSPHATE AND INHIBITOR DADME-IMMUCILLIN-G</scope>
    <scope>SUBUNIT</scope>
</reference>
<reference evidence="23" key="8">
    <citation type="journal article" date="2014" name="PLoS ONE">
        <title>Structural determinants of the 5'-methylthioinosine specificity of Plasmodium purine nucleoside phosphorylase.</title>
        <authorList>
            <person name="Donaldson T.M."/>
            <person name="Ting L.M."/>
            <person name="Zhan C."/>
            <person name="Shi W."/>
            <person name="Zheng R."/>
            <person name="Almo S.C."/>
            <person name="Kim K."/>
        </authorList>
    </citation>
    <scope>X-RAY CRYSTALLOGRAPHY (2.80 ANGSTROMS) OF 2-245 OF MUTANT ILE-66; ILE-73 AND PHE-160 IN COMPLEX WITH INHIBITOR IMMUCILLIN-H AND PHOSPHATE</scope>
    <scope>FUNCTION</scope>
    <scope>CATALYTIC ACTIVITY</scope>
    <scope>ACTIVITY REGULATION</scope>
    <scope>BIOPHYSICOCHEMICAL PROPERTIES</scope>
    <scope>PATHWAY</scope>
    <scope>ACTIVE SITE</scope>
    <scope>MUTAGENESIS OF HIS-7; ARG-45; TYR-47; VAL-66; VAL-73; TYR-160; MET-183 AND ASP-206</scope>
</reference>
<reference evidence="25 26" key="9">
    <citation type="journal article" date="2018" name="Proc. Natl. Acad. Sci. U.S.A.">
        <title>Genetic resistance to purine nucleoside phosphorylase inhibition in Plasmodium falciparum.</title>
        <authorList>
            <person name="Ducati R.G."/>
            <person name="Namanja-Magliano H.A."/>
            <person name="Harijan R.K."/>
            <person name="Fajardo J.E."/>
            <person name="Fiser A."/>
            <person name="Daily J.P."/>
            <person name="Schramm V.L."/>
        </authorList>
    </citation>
    <scope>X-RAY CRYSTALLOGRAPHY (1.57 ANGSTROMS) OF MUTANT ASP-181 AND ILE-183 IN COMPLEX WITH PHOSPHATE AND INHIBITOR DADME-IMMUCILIN G</scope>
    <scope>FUNCTION</scope>
    <scope>CATALYTIC ACTIVITY</scope>
    <scope>ACTIVITY REGULATION</scope>
    <scope>BIOPHYSICOCHEMICAL PROPERTIES</scope>
    <scope>PATHWAY</scope>
    <scope>MUTAGENESIS OF VAL-181 AND MET-183</scope>
</reference>
<evidence type="ECO:0000250" key="1">
    <source>
        <dbReference type="UniProtKB" id="Q8T9Z7"/>
    </source>
</evidence>
<evidence type="ECO:0000269" key="2">
    <source>
    </source>
</evidence>
<evidence type="ECO:0000269" key="3">
    <source>
    </source>
</evidence>
<evidence type="ECO:0000269" key="4">
    <source>
    </source>
</evidence>
<evidence type="ECO:0000269" key="5">
    <source>
    </source>
</evidence>
<evidence type="ECO:0000269" key="6">
    <source>
    </source>
</evidence>
<evidence type="ECO:0000269" key="7">
    <source>
    </source>
</evidence>
<evidence type="ECO:0000269" key="8">
    <source ref="7"/>
</evidence>
<evidence type="ECO:0000303" key="9">
    <source>
    </source>
</evidence>
<evidence type="ECO:0000303" key="10">
    <source>
    </source>
</evidence>
<evidence type="ECO:0000305" key="11"/>
<evidence type="ECO:0000305" key="12">
    <source>
    </source>
</evidence>
<evidence type="ECO:0000305" key="13">
    <source>
    </source>
</evidence>
<evidence type="ECO:0000305" key="14">
    <source>
    </source>
</evidence>
<evidence type="ECO:0000305" key="15">
    <source ref="7"/>
</evidence>
<evidence type="ECO:0000312" key="16">
    <source>
        <dbReference type="EMBL" id="CAD51497.1"/>
    </source>
</evidence>
<evidence type="ECO:0000312" key="17">
    <source>
        <dbReference type="Proteomes" id="UP000001450"/>
    </source>
</evidence>
<evidence type="ECO:0007744" key="18">
    <source>
        <dbReference type="PDB" id="1NW4"/>
    </source>
</evidence>
<evidence type="ECO:0007744" key="19">
    <source>
        <dbReference type="PDB" id="1Q1G"/>
    </source>
</evidence>
<evidence type="ECO:0007744" key="20">
    <source>
        <dbReference type="PDB" id="1SQ6"/>
    </source>
</evidence>
<evidence type="ECO:0007744" key="21">
    <source>
        <dbReference type="PDB" id="2BSX"/>
    </source>
</evidence>
<evidence type="ECO:0007744" key="22">
    <source>
        <dbReference type="PDB" id="3ENZ"/>
    </source>
</evidence>
<evidence type="ECO:0007744" key="23">
    <source>
        <dbReference type="PDB" id="3FOW"/>
    </source>
</evidence>
<evidence type="ECO:0007744" key="24">
    <source>
        <dbReference type="PDB" id="3PHC"/>
    </source>
</evidence>
<evidence type="ECO:0007744" key="25">
    <source>
        <dbReference type="PDB" id="6AQS"/>
    </source>
</evidence>
<evidence type="ECO:0007744" key="26">
    <source>
        <dbReference type="PDB" id="6AQU"/>
    </source>
</evidence>
<evidence type="ECO:0007829" key="27">
    <source>
        <dbReference type="PDB" id="2BSX"/>
    </source>
</evidence>
<evidence type="ECO:0007829" key="28">
    <source>
        <dbReference type="PDB" id="6AQS"/>
    </source>
</evidence>
<proteinExistence type="evidence at protein level"/>
<protein>
    <recommendedName>
        <fullName evidence="10">Purine nucleoside phosphorylase</fullName>
        <ecNumber evidence="2 3 4 5 6 7">2.4.2.1</ecNumber>
    </recommendedName>
    <alternativeName>
        <fullName evidence="10">PfPNP</fullName>
    </alternativeName>
    <alternativeName>
        <fullName evidence="9">S-methyl-5'-thioinosine phosphorylase</fullName>
        <ecNumber evidence="2 4 6">2.4.2.44</ecNumber>
    </alternativeName>
</protein>
<organism evidence="17">
    <name type="scientific">Plasmodium falciparum (isolate 3D7)</name>
    <dbReference type="NCBI Taxonomy" id="36329"/>
    <lineage>
        <taxon>Eukaryota</taxon>
        <taxon>Sar</taxon>
        <taxon>Alveolata</taxon>
        <taxon>Apicomplexa</taxon>
        <taxon>Aconoidasida</taxon>
        <taxon>Haemosporida</taxon>
        <taxon>Plasmodiidae</taxon>
        <taxon>Plasmodium</taxon>
        <taxon>Plasmodium (Laverania)</taxon>
    </lineage>
</organism>
<comment type="function">
    <text evidence="1 2 3 4 5 6 7">As part of the purine salvage pathway, catalyzes the phosphorolytic breakdown of the N-glycosidic bond in the beta-(deoxy)ribonucleoside molecules, with the formation of the corresponding free purine bases and pentose-1-phosphate (PubMed:14982926, PubMed:16131758, PubMed:18957439, PubMed:19575810, PubMed:24416224, PubMed:29440412). Preferentially acts on inosine and guanosine, and to a lesser extent on 2'-deoxyguanosine and guanosine (PubMed:14982926, PubMed:16131758, PubMed:19575810). Also catalyzes the phosphorylation of S-methyl-5'-thioinosine (MTI) to hypoxanthine; MTI is produced by adenosine deaminase (ADA)-mediated breakdown of S-methyl-5'-thioadenosine (MTA), a major by-product of polyamine biosynthesis (PubMed:14982926, PubMed:18957439, PubMed:24416224). Generates hypoxanthine from both the purine salvage pathway and from polyamine metabolism which is required for nucleic acids synthesis (PubMed:14982926, PubMed:18957439, PubMed:24416224). Has no activity towards adenosine (By similarity).</text>
</comment>
<comment type="catalytic activity">
    <reaction evidence="2 3 4 5 6 7">
        <text>inosine + phosphate = alpha-D-ribose 1-phosphate + hypoxanthine</text>
        <dbReference type="Rhea" id="RHEA:27646"/>
        <dbReference type="ChEBI" id="CHEBI:17368"/>
        <dbReference type="ChEBI" id="CHEBI:17596"/>
        <dbReference type="ChEBI" id="CHEBI:43474"/>
        <dbReference type="ChEBI" id="CHEBI:57720"/>
        <dbReference type="EC" id="2.4.2.1"/>
    </reaction>
</comment>
<comment type="catalytic activity">
    <reaction evidence="5">
        <text>guanosine + phosphate = alpha-D-ribose 1-phosphate + guanine</text>
        <dbReference type="Rhea" id="RHEA:13233"/>
        <dbReference type="ChEBI" id="CHEBI:16235"/>
        <dbReference type="ChEBI" id="CHEBI:16750"/>
        <dbReference type="ChEBI" id="CHEBI:43474"/>
        <dbReference type="ChEBI" id="CHEBI:57720"/>
        <dbReference type="EC" id="2.4.2.1"/>
    </reaction>
</comment>
<comment type="catalytic activity">
    <reaction evidence="5">
        <text>2'-deoxyguanosine + phosphate = 2-deoxy-alpha-D-ribose 1-phosphate + guanine</text>
        <dbReference type="Rhea" id="RHEA:27738"/>
        <dbReference type="ChEBI" id="CHEBI:16235"/>
        <dbReference type="ChEBI" id="CHEBI:17172"/>
        <dbReference type="ChEBI" id="CHEBI:43474"/>
        <dbReference type="ChEBI" id="CHEBI:57259"/>
        <dbReference type="EC" id="2.4.2.1"/>
    </reaction>
</comment>
<comment type="catalytic activity">
    <reaction evidence="5">
        <text>2'-deoxyinosine + phosphate = 2-deoxy-alpha-D-ribose 1-phosphate + hypoxanthine</text>
        <dbReference type="Rhea" id="RHEA:27750"/>
        <dbReference type="ChEBI" id="CHEBI:17368"/>
        <dbReference type="ChEBI" id="CHEBI:28997"/>
        <dbReference type="ChEBI" id="CHEBI:43474"/>
        <dbReference type="ChEBI" id="CHEBI:57259"/>
        <dbReference type="EC" id="2.4.2.1"/>
    </reaction>
</comment>
<comment type="catalytic activity">
    <reaction evidence="2 4 6">
        <text>S-methyl-5'-thioinosine + phosphate = 5-(methylsulfanyl)-alpha-D-ribose 1-phosphate + hypoxanthine</text>
        <dbReference type="Rhea" id="RHEA:30643"/>
        <dbReference type="ChEBI" id="CHEBI:17368"/>
        <dbReference type="ChEBI" id="CHEBI:43474"/>
        <dbReference type="ChEBI" id="CHEBI:48595"/>
        <dbReference type="ChEBI" id="CHEBI:58533"/>
        <dbReference type="EC" id="2.4.2.44"/>
    </reaction>
</comment>
<comment type="activity regulation">
    <text evidence="2 6 7">Inhibited by Immucillin-H and 5'-methylthio-Immucillin-H (PubMed:14982926, PubMed:24416224). Inhibited by 5'-deaza-1'-aza-2c-deoxy-1'-(9-methylene)-Immucilin-G (DADMe-ImmG) (PubMed:29440412).</text>
</comment>
<comment type="biophysicochemical properties">
    <kinetics>
        <KM evidence="2 5">4.7 uM for inosine (at 25 degrees Celsius and pH 7.5)</KM>
        <KM evidence="6">11 uM for inosine (at pH 7.4)</KM>
        <KM evidence="7">7.6 uM for inosine (at 25 degrees Celsius and pH 7.4)</KM>
        <KM evidence="5">2.2 uM for guanosine</KM>
        <KM evidence="5">25.3 uM for 2'-deoxyinosine</KM>
        <KM evidence="5">16.3 uM for 2'-deoxyguanosine</KM>
        <KM evidence="2">16 uM for 5'-methylthioinosine (at 25 degrees Celsius and pH 7.5)</KM>
        <KM evidence="6">8.8 uM for 5'-methylthioinosine (at pH 7.4)</KM>
        <text evidence="2 5 6 7">kcat is 1.7 sec(-1) with inosine as substrate (PubMed:14982926, PubMed:24416224). kcat is 2.63 sec(-1) with inosine as substrate (PubMed:29440412). kcat is 1.1 sec(-1) with guanosine as substrate (PubMed:19575810). kcat is 1.5 sec(-1) with 2'-deoxyinosine as substrate (PubMed:19575810). kcat is 1.1 sec(-1) with 2'-deoxyguanosine as substrate (PubMed:19575810). kcat is 1.5 sec(-1) with 5'-methylthioinosine as substrate (PubMed:14982926). kcat is 0.83 sec(-1) with 5'-methylthioinosine as substrate (PubMed:24416224).</text>
    </kinetics>
</comment>
<comment type="pathway">
    <text evidence="2 3 4 5 6 7">Purine metabolism; purine nucleoside salvage.</text>
</comment>
<comment type="subunit">
    <text evidence="3 12 13 15">Homohexamer; trimer of homodimers.</text>
</comment>
<comment type="developmental stage">
    <text evidence="4">Expressed during the parasite blood stage, including in trophozoites (at protein level).</text>
</comment>
<comment type="disruption phenotype">
    <text evidence="4">Severe growth defect in host erythrocytes which is rescued by the addition of exogenous purines (PubMed:18957439). Loss of purine nucleoside phosphorylase activity (PubMed:18957439).</text>
</comment>
<comment type="similarity">
    <text evidence="11">Belongs to the PNP/MTAP phosphorylase family.</text>
</comment>
<dbReference type="EC" id="2.4.2.1" evidence="2 3 4 5 6 7"/>
<dbReference type="EC" id="2.4.2.44" evidence="2 4 6"/>
<dbReference type="EMBL" id="AL844504">
    <property type="protein sequence ID" value="CAD51497.1"/>
    <property type="molecule type" value="Genomic_DNA"/>
</dbReference>
<dbReference type="RefSeq" id="XP_001351690.1">
    <property type="nucleotide sequence ID" value="XM_001351654.1"/>
</dbReference>
<dbReference type="PDB" id="1NW4">
    <property type="method" value="X-ray"/>
    <property type="resolution" value="2.20 A"/>
    <property type="chains" value="A/B/C/D/E/F=2-245"/>
</dbReference>
<dbReference type="PDB" id="1Q1G">
    <property type="method" value="X-ray"/>
    <property type="resolution" value="2.02 A"/>
    <property type="chains" value="A/B/C/D/E/F=2-245"/>
</dbReference>
<dbReference type="PDB" id="1SQ6">
    <property type="method" value="X-ray"/>
    <property type="resolution" value="2.40 A"/>
    <property type="chains" value="A=1-245"/>
</dbReference>
<dbReference type="PDB" id="2BSX">
    <property type="method" value="X-ray"/>
    <property type="resolution" value="2.00 A"/>
    <property type="chains" value="A=1-245"/>
</dbReference>
<dbReference type="PDB" id="3ENZ">
    <property type="method" value="X-ray"/>
    <property type="resolution" value="2.03 A"/>
    <property type="chains" value="A/B/C/D/E/F=1-245"/>
</dbReference>
<dbReference type="PDB" id="3FOW">
    <property type="method" value="X-ray"/>
    <property type="resolution" value="2.80 A"/>
    <property type="chains" value="A/B=2-245"/>
</dbReference>
<dbReference type="PDB" id="3PHC">
    <property type="method" value="X-ray"/>
    <property type="resolution" value="2.00 A"/>
    <property type="chains" value="A/B/C/D/E/F=2-245"/>
</dbReference>
<dbReference type="PDB" id="6AQS">
    <property type="method" value="X-ray"/>
    <property type="resolution" value="1.57 A"/>
    <property type="chains" value="A=1-245"/>
</dbReference>
<dbReference type="PDB" id="6AQU">
    <property type="method" value="X-ray"/>
    <property type="resolution" value="2.60 A"/>
    <property type="chains" value="A/B=1-245"/>
</dbReference>
<dbReference type="PDB" id="8W7H">
    <property type="method" value="X-ray"/>
    <property type="resolution" value="1.85 A"/>
    <property type="chains" value="A=1-245"/>
</dbReference>
<dbReference type="PDBsum" id="1NW4"/>
<dbReference type="PDBsum" id="1Q1G"/>
<dbReference type="PDBsum" id="1SQ6"/>
<dbReference type="PDBsum" id="2BSX"/>
<dbReference type="PDBsum" id="3ENZ"/>
<dbReference type="PDBsum" id="3FOW"/>
<dbReference type="PDBsum" id="3PHC"/>
<dbReference type="PDBsum" id="6AQS"/>
<dbReference type="PDBsum" id="6AQU"/>
<dbReference type="PDBsum" id="8W7H"/>
<dbReference type="SMR" id="Q8I3X4"/>
<dbReference type="FunCoup" id="Q8I3X4">
    <property type="interactions" value="31"/>
</dbReference>
<dbReference type="IntAct" id="Q8I3X4">
    <property type="interactions" value="1"/>
</dbReference>
<dbReference type="STRING" id="36329.Q8I3X4"/>
<dbReference type="ChEMBL" id="CHEMBL4523389"/>
<dbReference type="DrugBank" id="DB03881">
    <property type="generic name" value="(2S,3R,4S,5S)-3,4-Dihydroxy-2-[(methylsulfanyl)methyl]-5-(4-oxo-4,5-dihydro-1H-pyrrolo[3,2-d]pyrimidin-7-yl)pyrrolidinium"/>
</dbReference>
<dbReference type="DrugBank" id="DB11638">
    <property type="generic name" value="Artenimol"/>
</dbReference>
<dbReference type="SwissPalm" id="Q8I3X4"/>
<dbReference type="PaxDb" id="5833-PFE0660c"/>
<dbReference type="EnsemblProtists" id="CAD51497">
    <property type="protein sequence ID" value="CAD51497"/>
    <property type="gene ID" value="PF3D7_0513300"/>
</dbReference>
<dbReference type="GeneID" id="812947"/>
<dbReference type="KEGG" id="pfa:PF3D7_0513300"/>
<dbReference type="VEuPathDB" id="PlasmoDB:PF3D7_0513300"/>
<dbReference type="HOGENOM" id="CLU_068457_0_1_1"/>
<dbReference type="InParanoid" id="Q8I3X4"/>
<dbReference type="OMA" id="PQCLLCG"/>
<dbReference type="OrthoDB" id="416752at2759"/>
<dbReference type="PhylomeDB" id="Q8I3X4"/>
<dbReference type="BRENDA" id="2.4.2.1">
    <property type="organism ID" value="4889"/>
</dbReference>
<dbReference type="BRENDA" id="2.4.2.3">
    <property type="organism ID" value="4889"/>
</dbReference>
<dbReference type="Reactome" id="R-PFA-73614">
    <property type="pathway name" value="Pyrimidine salvage"/>
</dbReference>
<dbReference type="Reactome" id="R-PFA-73621">
    <property type="pathway name" value="Pyrimidine catabolism"/>
</dbReference>
<dbReference type="SABIO-RK" id="Q8I3X4"/>
<dbReference type="UniPathway" id="UPA00606"/>
<dbReference type="EvolutionaryTrace" id="Q8I3X4"/>
<dbReference type="Proteomes" id="UP000001450">
    <property type="component" value="Chromosome 5"/>
</dbReference>
<dbReference type="GO" id="GO:0005829">
    <property type="term" value="C:cytosol"/>
    <property type="evidence" value="ECO:0000318"/>
    <property type="project" value="GO_Central"/>
</dbReference>
<dbReference type="GO" id="GO:0047975">
    <property type="term" value="F:guanosine phosphorylase activity"/>
    <property type="evidence" value="ECO:0007669"/>
    <property type="project" value="RHEA"/>
</dbReference>
<dbReference type="GO" id="GO:0004731">
    <property type="term" value="F:purine-nucleoside phosphorylase activity"/>
    <property type="evidence" value="ECO:0000314"/>
    <property type="project" value="UniProtKB"/>
</dbReference>
<dbReference type="GO" id="GO:0017061">
    <property type="term" value="F:S-methyl-5-thioadenosine phosphorylase activity"/>
    <property type="evidence" value="ECO:0000314"/>
    <property type="project" value="UniProtKB"/>
</dbReference>
<dbReference type="GO" id="GO:0004850">
    <property type="term" value="F:uridine phosphorylase activity"/>
    <property type="evidence" value="ECO:0000318"/>
    <property type="project" value="GO_Central"/>
</dbReference>
<dbReference type="GO" id="GO:0006148">
    <property type="term" value="P:inosine catabolic process"/>
    <property type="evidence" value="ECO:0000314"/>
    <property type="project" value="UniProtKB"/>
</dbReference>
<dbReference type="GO" id="GO:0006195">
    <property type="term" value="P:purine nucleotide catabolic process"/>
    <property type="evidence" value="ECO:0000314"/>
    <property type="project" value="UniProtKB"/>
</dbReference>
<dbReference type="GO" id="GO:0006166">
    <property type="term" value="P:purine ribonucleoside salvage"/>
    <property type="evidence" value="ECO:0007669"/>
    <property type="project" value="UniProtKB-KW"/>
</dbReference>
<dbReference type="GO" id="GO:0006218">
    <property type="term" value="P:uridine catabolic process"/>
    <property type="evidence" value="ECO:0000318"/>
    <property type="project" value="GO_Central"/>
</dbReference>
<dbReference type="CDD" id="cd17767">
    <property type="entry name" value="UP_EcUdp-like"/>
    <property type="match status" value="1"/>
</dbReference>
<dbReference type="Gene3D" id="3.40.50.1580">
    <property type="entry name" value="Nucleoside phosphorylase domain"/>
    <property type="match status" value="1"/>
</dbReference>
<dbReference type="InterPro" id="IPR000845">
    <property type="entry name" value="Nucleoside_phosphorylase_d"/>
</dbReference>
<dbReference type="InterPro" id="IPR035994">
    <property type="entry name" value="Nucleoside_phosphorylase_sf"/>
</dbReference>
<dbReference type="PANTHER" id="PTHR43691:SF11">
    <property type="entry name" value="FI09636P-RELATED"/>
    <property type="match status" value="1"/>
</dbReference>
<dbReference type="PANTHER" id="PTHR43691">
    <property type="entry name" value="URIDINE PHOSPHORYLASE"/>
    <property type="match status" value="1"/>
</dbReference>
<dbReference type="Pfam" id="PF01048">
    <property type="entry name" value="PNP_UDP_1"/>
    <property type="match status" value="1"/>
</dbReference>
<dbReference type="SUPFAM" id="SSF53167">
    <property type="entry name" value="Purine and uridine phosphorylases"/>
    <property type="match status" value="1"/>
</dbReference>
<keyword id="KW-0002">3D-structure</keyword>
<keyword id="KW-0328">Glycosyltransferase</keyword>
<keyword id="KW-0660">Purine salvage</keyword>
<keyword id="KW-1185">Reference proteome</keyword>
<keyword id="KW-0808">Transferase</keyword>
<sequence>MDNLLRHLKISKEQITPVVLVVGDPGRVDKIKVVCDSYVDLAYNREYKSVECHYKGQKFLCVSHGVGSAGCAVCFEELCQNGAKVIIRAGSCGSLQPDLIKRGDICICNAAVREDRVSHLLIHGDFPAVGDFDVYDTLNKCAQELNVPVFNGISVSSDMYYPNKIIPSRLEDYSKANAAVVEMELATLMVIGTLRKVKTGGILIVDGCPFKWDEGDFDNNLVPHQLENMIKIALGACAKLATKYA</sequence>
<feature type="chain" id="PRO_0000451825" description="Purine nucleoside phosphorylase">
    <location>
        <begin position="1"/>
        <end position="245"/>
    </location>
</feature>
<feature type="active site" description="Proton donor" evidence="14">
    <location>
        <position position="206"/>
    </location>
</feature>
<feature type="binding site" evidence="14 15 23 24">
    <location>
        <position position="7"/>
    </location>
    <ligand>
        <name>a purine D-ribonucleoside</name>
        <dbReference type="ChEBI" id="CHEBI:142355"/>
        <note>ligand shared between dimeric partners</note>
    </ligand>
</feature>
<feature type="binding site" description="in other chain" evidence="6 8 12 13 18 19 22 23 24">
    <location>
        <begin position="23"/>
        <end position="27"/>
    </location>
    <ligand>
        <name>phosphate</name>
        <dbReference type="ChEBI" id="CHEBI:43474"/>
        <note>ligand shared between dimeric partners</note>
    </ligand>
</feature>
<feature type="binding site" evidence="6 8 12 13 18 19 22 23 24">
    <location>
        <position position="45"/>
    </location>
    <ligand>
        <name>phosphate</name>
        <dbReference type="ChEBI" id="CHEBI:43474"/>
        <note>ligand shared between dimeric partners</note>
    </ligand>
</feature>
<feature type="binding site" description="in other chain" evidence="6 7 8 12 13 18 19 22 23 24 25 26">
    <location>
        <begin position="88"/>
        <end position="91"/>
    </location>
    <ligand>
        <name>phosphate</name>
        <dbReference type="ChEBI" id="CHEBI:43474"/>
        <note>ligand shared between dimeric partners</note>
    </ligand>
</feature>
<feature type="binding site" description="in other chain" evidence="3 14 15 21 23 24">
    <location>
        <begin position="183"/>
        <end position="184"/>
    </location>
    <ligand>
        <name>a purine D-ribonucleoside</name>
        <dbReference type="ChEBI" id="CHEBI:142355"/>
        <note>ligand shared between dimeric partners</note>
    </ligand>
</feature>
<feature type="mutagenesis site" description="Slight decrease in catalytic activity towards inosine and 5'-methylthioinosine." evidence="6">
    <original>H</original>
    <variation>A</variation>
    <location>
        <position position="7"/>
    </location>
</feature>
<feature type="mutagenesis site" description="23-fold decrease in catalytic efficiency for inosine as substrate. Slight decrease in catalytic efficiency for 5'-methylthioinosine as substrate." evidence="6">
    <original>H</original>
    <variation>F</variation>
    <location>
        <position position="7"/>
    </location>
</feature>
<feature type="mutagenesis site" description="Slight decrease in catalytic activity towards inosine. Slight increase in catalytic activity towards 5'-methylthioinosine." evidence="6">
    <original>H</original>
    <variation>S</variation>
    <location>
        <position position="7"/>
    </location>
</feature>
<feature type="mutagenesis site" description="1300-fold decrease in catalytic efficiency for inosine as substrate. Loss of catalytic activity towards 5'-methylthioinosine." evidence="6">
    <original>R</original>
    <variation>A</variation>
    <location>
        <position position="45"/>
    </location>
</feature>
<feature type="mutagenesis site" description="790-fold decrease in catalytic efficiency for inosine as substrate. 4000-fold decrease in catalytic efficiency for 5'-methylthioinosine as substrate." evidence="6">
    <original>Y</original>
    <variation>A</variation>
    <location>
        <position position="47"/>
    </location>
</feature>
<feature type="mutagenesis site" description="No effect on catalytic activity towards inosine. Slight increase in catalytic efficiency with 5'-methylthioinosine as substrate." evidence="6">
    <original>V</original>
    <variation>A</variation>
    <location>
        <position position="66"/>
    </location>
</feature>
<feature type="mutagenesis site" description="40-fold decrease in catalytic efficiency with inosine as substrate. Loss of catalytic activity towards 5'-methylthioinosine." evidence="6">
    <original>V</original>
    <variation>F</variation>
    <location>
        <position position="66"/>
    </location>
</feature>
<feature type="mutagenesis site" description="No effect on catalytic activity towards inosine or 5'-methylthioinosine; when associated with I-73. 20-fold decrease in catalytic efficiency with 5'-methylthioinosine as substrate and no effect on catalytic activity towards inosine; when associated with F-160. 170-fold decrease in catalytic efficiency with 5'-methylthioinosine as substrate and no effect on catalytic activity towards inosine; when associated with I-73 and F-160." evidence="6">
    <original>V</original>
    <variation>I</variation>
    <location>
        <position position="66"/>
    </location>
</feature>
<feature type="mutagenesis site" description="8-fold decrease in catalytic efficiency with inosine as substrate. Slight increase in catalytic efficiency with 5'-methylthioinosine as substrate." evidence="6">
    <original>V</original>
    <variation>S</variation>
    <location>
        <position position="66"/>
    </location>
</feature>
<feature type="mutagenesis site" description="Slight decrease in catalytic efficiency with inosine or 5'-methylthioinosine as substrates." evidence="6">
    <original>V</original>
    <variation>A</variation>
    <location>
        <position position="73"/>
    </location>
</feature>
<feature type="mutagenesis site" description="Loss of catalytic activity towards inosine and 5'-methylthioinosine." evidence="6">
    <original>V</original>
    <variation>F</variation>
    <location>
        <position position="73"/>
    </location>
</feature>
<feature type="mutagenesis site" description="No effect on catalytic activity towards inosine or 5'-methylthioinosine; when associated with I-66. 20-fold decrease in catalytic efficiency with 5'-methylthioinosine as substrate and no effect on catalytic activity towards inosine; when associated with F-160. 170-fold decrease in catalytic efficiency with 5'-methylthioinosine as substrate and no effect on catalytic activity towards inosine; when associated with I-66 and F-160." evidence="6">
    <original>V</original>
    <variation>I</variation>
    <location>
        <position position="73"/>
    </location>
</feature>
<feature type="mutagenesis site" description="Slight decrease in catalytic efficiency with inosine as substrate. 8500-fold decrease in catalytic efficiency with 5'-methylthioinosine as substrate." evidence="6">
    <original>V</original>
    <variation>S</variation>
    <location>
        <position position="73"/>
    </location>
</feature>
<feature type="mutagenesis site" description="680-fold decrease in catalytic efficiency with inosine as substrate. 200-fold decrease in catalytic efficiency with 5'-methylthioinosine as substrate." evidence="6">
    <original>Y</original>
    <variation>A</variation>
    <location>
        <position position="160"/>
    </location>
</feature>
<feature type="mutagenesis site" description="No effect on catalytic activity towards inosine. 14-fold decrease in catalytic efficiency with 5'-methylthioinosine as substrate. 20-fold decrease in catalytic efficiency with 5'-methylthioinosine as substrate; when associated with I-66 or I-73. 170-fold decrease in catalytic efficiency with 5'-methylthioinosine as substrate and no effect on catalytic activity towards inosine; when associated with I-66 and I-73." evidence="6">
    <original>Y</original>
    <variation>F</variation>
    <location>
        <position position="160"/>
    </location>
</feature>
<feature type="mutagenesis site" description="4-fold decrease in catalytic efficiency with inosine as substrate. Reduced affinity for DADMe-ImmG inhibitor." evidence="7">
    <original>V</original>
    <variation>D</variation>
    <location>
        <position position="181"/>
    </location>
</feature>
<feature type="mutagenesis site" description="20-fold decrease in affinity for inosine. Loss of catalytic activity towards 5'-methylthioinosine." evidence="6">
    <original>M</original>
    <variation>A</variation>
    <location>
        <position position="183"/>
    </location>
</feature>
<feature type="mutagenesis site" description="17300-fold decrease in catalytic efficiency with inosine as substrate. Reduced affinity for DADMe-ImmG inhibitor." evidence="7">
    <original>M</original>
    <variation>L</variation>
    <location>
        <position position="183"/>
    </location>
</feature>
<feature type="mutagenesis site" description="200-fold decrease in catalytic efficiency with inosine as substrate. Loss of catalytic activity towards 5'-methylthioinosine." evidence="6">
    <original>D</original>
    <variation>A</variation>
    <location>
        <position position="206"/>
    </location>
</feature>
<feature type="turn" evidence="28">
    <location>
        <begin position="6"/>
        <end position="8"/>
    </location>
</feature>
<feature type="helix" evidence="28">
    <location>
        <begin position="12"/>
        <end position="14"/>
    </location>
</feature>
<feature type="strand" evidence="28">
    <location>
        <begin position="17"/>
        <end position="23"/>
    </location>
</feature>
<feature type="helix" evidence="28">
    <location>
        <begin position="25"/>
        <end position="32"/>
    </location>
</feature>
<feature type="strand" evidence="28">
    <location>
        <begin position="35"/>
        <end position="44"/>
    </location>
</feature>
<feature type="strand" evidence="28">
    <location>
        <begin position="47"/>
        <end position="54"/>
    </location>
</feature>
<feature type="strand" evidence="28">
    <location>
        <begin position="57"/>
        <end position="63"/>
    </location>
</feature>
<feature type="helix" evidence="28">
    <location>
        <begin position="68"/>
        <end position="79"/>
    </location>
</feature>
<feature type="turn" evidence="28">
    <location>
        <begin position="80"/>
        <end position="82"/>
    </location>
</feature>
<feature type="strand" evidence="28">
    <location>
        <begin position="85"/>
        <end position="95"/>
    </location>
</feature>
<feature type="turn" evidence="28">
    <location>
        <begin position="97"/>
        <end position="99"/>
    </location>
</feature>
<feature type="strand" evidence="28">
    <location>
        <begin position="105"/>
        <end position="116"/>
    </location>
</feature>
<feature type="helix" evidence="28">
    <location>
        <begin position="117"/>
        <end position="121"/>
    </location>
</feature>
<feature type="helix" evidence="28">
    <location>
        <begin position="132"/>
        <end position="144"/>
    </location>
</feature>
<feature type="strand" evidence="28">
    <location>
        <begin position="150"/>
        <end position="158"/>
    </location>
</feature>
<feature type="strand" evidence="28">
    <location>
        <begin position="164"/>
        <end position="166"/>
    </location>
</feature>
<feature type="helix" evidence="28">
    <location>
        <begin position="170"/>
        <end position="175"/>
    </location>
</feature>
<feature type="strand" evidence="28">
    <location>
        <begin position="180"/>
        <end position="184"/>
    </location>
</feature>
<feature type="helix" evidence="28">
    <location>
        <begin position="185"/>
        <end position="194"/>
    </location>
</feature>
<feature type="strand" evidence="28">
    <location>
        <begin position="198"/>
        <end position="207"/>
    </location>
</feature>
<feature type="helix" evidence="27">
    <location>
        <begin position="209"/>
        <end position="211"/>
    </location>
</feature>
<feature type="helix" evidence="28">
    <location>
        <begin position="223"/>
        <end position="241"/>
    </location>
</feature>
<feature type="turn" evidence="28">
    <location>
        <begin position="242"/>
        <end position="244"/>
    </location>
</feature>
<name>PNPH_PLAF7</name>
<accession>Q8I3X4</accession>
<gene>
    <name evidence="10" type="primary">PNP</name>
    <name evidence="16" type="ORF">PF3D7_0513300</name>
</gene>